<organism>
    <name type="scientific">Vesicomyosocius okutanii subsp. Calyptogena okutanii (strain HA)</name>
    <dbReference type="NCBI Taxonomy" id="412965"/>
    <lineage>
        <taxon>Bacteria</taxon>
        <taxon>Pseudomonadati</taxon>
        <taxon>Pseudomonadota</taxon>
        <taxon>Gammaproteobacteria</taxon>
        <taxon>Candidatus Pseudothioglobaceae</taxon>
        <taxon>Candidatus Vesicomyosocius</taxon>
    </lineage>
</organism>
<dbReference type="EC" id="3.5.4.16" evidence="1"/>
<dbReference type="EMBL" id="AP009247">
    <property type="protein sequence ID" value="BAF61415.1"/>
    <property type="molecule type" value="Genomic_DNA"/>
</dbReference>
<dbReference type="RefSeq" id="WP_011929685.1">
    <property type="nucleotide sequence ID" value="NC_009465.1"/>
</dbReference>
<dbReference type="SMR" id="A5CXA1"/>
<dbReference type="STRING" id="412965.COSY_0286"/>
<dbReference type="KEGG" id="vok:COSY_0286"/>
<dbReference type="eggNOG" id="COG1469">
    <property type="taxonomic scope" value="Bacteria"/>
</dbReference>
<dbReference type="HOGENOM" id="CLU_062816_1_1_6"/>
<dbReference type="OrthoDB" id="9774824at2"/>
<dbReference type="UniPathway" id="UPA00848">
    <property type="reaction ID" value="UER00151"/>
</dbReference>
<dbReference type="Proteomes" id="UP000000247">
    <property type="component" value="Chromosome"/>
</dbReference>
<dbReference type="GO" id="GO:0003934">
    <property type="term" value="F:GTP cyclohydrolase I activity"/>
    <property type="evidence" value="ECO:0007669"/>
    <property type="project" value="UniProtKB-UniRule"/>
</dbReference>
<dbReference type="GO" id="GO:0046654">
    <property type="term" value="P:tetrahydrofolate biosynthetic process"/>
    <property type="evidence" value="ECO:0007669"/>
    <property type="project" value="UniProtKB-UniRule"/>
</dbReference>
<dbReference type="Gene3D" id="3.10.270.10">
    <property type="entry name" value="Urate Oxidase"/>
    <property type="match status" value="1"/>
</dbReference>
<dbReference type="HAMAP" id="MF_01527_B">
    <property type="entry name" value="GTP_cyclohydrol_B"/>
    <property type="match status" value="1"/>
</dbReference>
<dbReference type="InterPro" id="IPR022838">
    <property type="entry name" value="GTP_cyclohydrolase_FolE2"/>
</dbReference>
<dbReference type="InterPro" id="IPR003801">
    <property type="entry name" value="GTP_cyclohydrolase_FolE2/MptA"/>
</dbReference>
<dbReference type="NCBIfam" id="NF010200">
    <property type="entry name" value="PRK13674.1-1"/>
    <property type="match status" value="1"/>
</dbReference>
<dbReference type="PANTHER" id="PTHR36445">
    <property type="entry name" value="GTP CYCLOHYDROLASE MPTA"/>
    <property type="match status" value="1"/>
</dbReference>
<dbReference type="PANTHER" id="PTHR36445:SF1">
    <property type="entry name" value="GTP CYCLOHYDROLASE MPTA"/>
    <property type="match status" value="1"/>
</dbReference>
<dbReference type="Pfam" id="PF02649">
    <property type="entry name" value="GCHY-1"/>
    <property type="match status" value="1"/>
</dbReference>
<protein>
    <recommendedName>
        <fullName evidence="1">GTP cyclohydrolase FolE2</fullName>
        <ecNumber evidence="1">3.5.4.16</ecNumber>
    </recommendedName>
</protein>
<sequence length="264" mass="29857">MSATHLPDTQNSADTRHIIIDKVGIKDIIHPITYIDCDGNKMPTIGMFTMTVSLPEHVKGTHMSRFIEILNENSCEFSAHNFDQIIDKVKEKLESDTAHITLNFPFFRKKEAPSSGVKSMMDYQVTLYGTLNKGEVQVMIKVVVPVTSLCPCSKSISKYGAHNQRSHITIKAKVSKGRTLHIEDLIDLAERKASCELYALLKRDDEKMVTERAYDNPAFVEDLVRDIAVDLNADDKISYYCLESENFESIHNHSAYALIENLKC</sequence>
<evidence type="ECO:0000255" key="1">
    <source>
        <dbReference type="HAMAP-Rule" id="MF_01527"/>
    </source>
</evidence>
<feature type="chain" id="PRO_0000297507" description="GTP cyclohydrolase FolE2">
    <location>
        <begin position="1"/>
        <end position="264"/>
    </location>
</feature>
<feature type="site" description="May be catalytically important" evidence="1">
    <location>
        <position position="150"/>
    </location>
</feature>
<keyword id="KW-0378">Hydrolase</keyword>
<keyword id="KW-1185">Reference proteome</keyword>
<name>GCH4_VESOH</name>
<accession>A5CXA1</accession>
<comment type="function">
    <text evidence="1">Converts GTP to 7,8-dihydroneopterin triphosphate.</text>
</comment>
<comment type="catalytic activity">
    <reaction evidence="1">
        <text>GTP + H2O = 7,8-dihydroneopterin 3'-triphosphate + formate + H(+)</text>
        <dbReference type="Rhea" id="RHEA:17473"/>
        <dbReference type="ChEBI" id="CHEBI:15377"/>
        <dbReference type="ChEBI" id="CHEBI:15378"/>
        <dbReference type="ChEBI" id="CHEBI:15740"/>
        <dbReference type="ChEBI" id="CHEBI:37565"/>
        <dbReference type="ChEBI" id="CHEBI:58462"/>
        <dbReference type="EC" id="3.5.4.16"/>
    </reaction>
</comment>
<comment type="pathway">
    <text evidence="1">Cofactor biosynthesis; 7,8-dihydroneopterin triphosphate biosynthesis; 7,8-dihydroneopterin triphosphate from GTP: step 1/1.</text>
</comment>
<comment type="similarity">
    <text evidence="1">Belongs to the GTP cyclohydrolase IV family.</text>
</comment>
<gene>
    <name evidence="1" type="primary">folE2</name>
    <name type="ordered locus">COSY_0286</name>
</gene>
<proteinExistence type="inferred from homology"/>
<reference key="1">
    <citation type="journal article" date="2007" name="Curr. Biol.">
        <title>Reduced genome of the thioautotrophic intracellular symbiont in a deep-sea clam, Calyptogena okutanii.</title>
        <authorList>
            <person name="Kuwahara H."/>
            <person name="Yoshida T."/>
            <person name="Takaki Y."/>
            <person name="Shimamura S."/>
            <person name="Nishi S."/>
            <person name="Harada M."/>
            <person name="Matsuyama K."/>
            <person name="Takishita K."/>
            <person name="Kawato M."/>
            <person name="Uematsu K."/>
            <person name="Fujiwara Y."/>
            <person name="Sato T."/>
            <person name="Kato C."/>
            <person name="Kitagawa M."/>
            <person name="Kato I."/>
            <person name="Maruyama T."/>
        </authorList>
    </citation>
    <scope>NUCLEOTIDE SEQUENCE [LARGE SCALE GENOMIC DNA]</scope>
    <source>
        <strain>HA</strain>
    </source>
</reference>